<protein>
    <recommendedName>
        <fullName evidence="7">N-acetyl-alpha-D-glucosaminyl L-malate deacetylase 1</fullName>
        <shortName evidence="7">GlcNAc-Mal deacetylase 1</shortName>
        <ecNumber evidence="2">3.5.1.-</ecNumber>
    </recommendedName>
</protein>
<name>BSHB1_BACAN</name>
<evidence type="ECO:0000250" key="1">
    <source>
        <dbReference type="UniProtKB" id="Q81FP2"/>
    </source>
</evidence>
<evidence type="ECO:0000269" key="2">
    <source>
    </source>
</evidence>
<evidence type="ECO:0000269" key="3">
    <source>
    </source>
</evidence>
<evidence type="ECO:0000269" key="4">
    <source>
    </source>
</evidence>
<evidence type="ECO:0000303" key="5">
    <source>
    </source>
</evidence>
<evidence type="ECO:0000303" key="6">
    <source>
    </source>
</evidence>
<evidence type="ECO:0000305" key="7"/>
<evidence type="ECO:0000312" key="8">
    <source>
        <dbReference type="EMBL" id="AAP25493.1"/>
    </source>
</evidence>
<evidence type="ECO:0000312" key="9">
    <source>
        <dbReference type="EMBL" id="AAT30655.1"/>
    </source>
</evidence>
<evidence type="ECO:0000312" key="10">
    <source>
        <dbReference type="EMBL" id="AAT53764.1"/>
    </source>
</evidence>
<evidence type="ECO:0000312" key="11">
    <source>
        <dbReference type="EMBL" id="AJG28381.1"/>
    </source>
</evidence>
<evidence type="ECO:0000312" key="12">
    <source>
        <dbReference type="EMBL" id="AJH90866.1"/>
    </source>
</evidence>
<accession>Q81ST8</accession>
<accession>E9QQT9</accession>
<accession>E9QQU0</accession>
<accession>Q6I118</accession>
<accession>Q6KUX1</accession>
<dbReference type="EC" id="3.5.1.-" evidence="2"/>
<dbReference type="EMBL" id="AE016879">
    <property type="protein sequence ID" value="AAP25493.1"/>
    <property type="molecule type" value="Genomic_DNA"/>
</dbReference>
<dbReference type="EMBL" id="AE017334">
    <property type="protein sequence ID" value="AAT30655.1"/>
    <property type="molecule type" value="Genomic_DNA"/>
</dbReference>
<dbReference type="EMBL" id="AE017225">
    <property type="protein sequence ID" value="AAT53764.1"/>
    <property type="molecule type" value="Genomic_DNA"/>
</dbReference>
<dbReference type="EMBL" id="CP009902">
    <property type="protein sequence ID" value="AJH90866.1"/>
    <property type="molecule type" value="Genomic_DNA"/>
</dbReference>
<dbReference type="EMBL" id="CP010813">
    <property type="protein sequence ID" value="AJG28381.1"/>
    <property type="molecule type" value="Genomic_DNA"/>
</dbReference>
<dbReference type="RefSeq" id="NP_844007.1">
    <property type="nucleotide sequence ID" value="NC_003997.3"/>
</dbReference>
<dbReference type="RefSeq" id="WP_000015666.1">
    <property type="nucleotide sequence ID" value="NZ_WXXJ01000001.1"/>
</dbReference>
<dbReference type="RefSeq" id="YP_027713.1">
    <property type="nucleotide sequence ID" value="NC_005945.1"/>
</dbReference>
<dbReference type="SMR" id="Q81ST8"/>
<dbReference type="STRING" id="261594.GBAA_1557"/>
<dbReference type="DNASU" id="1087010"/>
<dbReference type="GeneID" id="75084846"/>
<dbReference type="KEGG" id="ban:BA_1557"/>
<dbReference type="KEGG" id="bar:GBAA_1557"/>
<dbReference type="KEGG" id="bat:BAS1444"/>
<dbReference type="PATRIC" id="fig|198094.11.peg.1527"/>
<dbReference type="eggNOG" id="COG2120">
    <property type="taxonomic scope" value="Bacteria"/>
</dbReference>
<dbReference type="HOGENOM" id="CLU_049311_3_1_9"/>
<dbReference type="OMA" id="YYYMING"/>
<dbReference type="OrthoDB" id="9778719at2"/>
<dbReference type="SABIO-RK" id="Q81ST8"/>
<dbReference type="Proteomes" id="UP000000427">
    <property type="component" value="Chromosome"/>
</dbReference>
<dbReference type="Proteomes" id="UP000000594">
    <property type="component" value="Chromosome"/>
</dbReference>
<dbReference type="GO" id="GO:0019213">
    <property type="term" value="F:deacetylase activity"/>
    <property type="evidence" value="ECO:0007669"/>
    <property type="project" value="InterPro"/>
</dbReference>
<dbReference type="GO" id="GO:0016811">
    <property type="term" value="F:hydrolase activity, acting on carbon-nitrogen (but not peptide) bonds, in linear amides"/>
    <property type="evidence" value="ECO:0007669"/>
    <property type="project" value="TreeGrafter"/>
</dbReference>
<dbReference type="GO" id="GO:0046872">
    <property type="term" value="F:metal ion binding"/>
    <property type="evidence" value="ECO:0007669"/>
    <property type="project" value="UniProtKB-KW"/>
</dbReference>
<dbReference type="GO" id="GO:0071793">
    <property type="term" value="P:bacillithiol biosynthetic process"/>
    <property type="evidence" value="ECO:0007669"/>
    <property type="project" value="InterPro"/>
</dbReference>
<dbReference type="Gene3D" id="3.40.50.10320">
    <property type="entry name" value="LmbE-like"/>
    <property type="match status" value="1"/>
</dbReference>
<dbReference type="InterPro" id="IPR023842">
    <property type="entry name" value="Bacillithiol_biosynth_BshB1"/>
</dbReference>
<dbReference type="InterPro" id="IPR003737">
    <property type="entry name" value="GlcNAc_PI_deacetylase-related"/>
</dbReference>
<dbReference type="InterPro" id="IPR024078">
    <property type="entry name" value="LmbE-like_dom_sf"/>
</dbReference>
<dbReference type="NCBIfam" id="TIGR04001">
    <property type="entry name" value="thiol_BshB1"/>
    <property type="match status" value="1"/>
</dbReference>
<dbReference type="PANTHER" id="PTHR12993:SF30">
    <property type="entry name" value="N-ACETYL-ALPHA-D-GLUCOSAMINYL L-MALATE DEACETYLASE 1"/>
    <property type="match status" value="1"/>
</dbReference>
<dbReference type="PANTHER" id="PTHR12993">
    <property type="entry name" value="N-ACETYLGLUCOSAMINYL-PHOSPHATIDYLINOSITOL DE-N-ACETYLASE-RELATED"/>
    <property type="match status" value="1"/>
</dbReference>
<dbReference type="Pfam" id="PF02585">
    <property type="entry name" value="PIG-L"/>
    <property type="match status" value="1"/>
</dbReference>
<dbReference type="SUPFAM" id="SSF102588">
    <property type="entry name" value="LmbE-like"/>
    <property type="match status" value="1"/>
</dbReference>
<sequence>MSGLHILAFGAHADDVEIGMAGTIAKYTKQGYEVGICDLTEADLSSNGTIELRKEEAKAAARIMGVKTRLNLAMPDRGLYMKEEYIREIVKVIRTYKPKLVFAPYYEDRHPDHANCAKLVEEAIFSAGIRKYMPEVPPHRVESFYHYMINGFHKPNFCIDISEYVSQKVEALEAYESQFSTGSDGVKTPLTEGYVETVVAREKMFGKEVGVLYAEGFMSKKPVLLHADLIGGCK</sequence>
<feature type="chain" id="PRO_0000433160" description="N-acetyl-alpha-D-glucosaminyl L-malate deacetylase 1">
    <location>
        <begin position="1"/>
        <end position="234"/>
    </location>
</feature>
<feature type="binding site" evidence="1">
    <location>
        <position position="12"/>
    </location>
    <ligand>
        <name>Zn(2+)</name>
        <dbReference type="ChEBI" id="CHEBI:29105"/>
    </ligand>
</feature>
<feature type="binding site" evidence="1">
    <location>
        <position position="15"/>
    </location>
    <ligand>
        <name>Zn(2+)</name>
        <dbReference type="ChEBI" id="CHEBI:29105"/>
    </ligand>
</feature>
<feature type="binding site" evidence="1">
    <location>
        <position position="113"/>
    </location>
    <ligand>
        <name>Zn(2+)</name>
        <dbReference type="ChEBI" id="CHEBI:29105"/>
    </ligand>
</feature>
<feature type="mutagenesis site" description="3000-fold decrease in activity." evidence="4">
    <original>D</original>
    <variation>A</variation>
    <location>
        <position position="14"/>
    </location>
</feature>
<feature type="mutagenesis site" description="Loss of activity." evidence="4">
    <original>R</original>
    <variation>A</variation>
    <location>
        <position position="53"/>
    </location>
</feature>
<feature type="mutagenesis site" description="Strong decrease in activity for GlcNAc-Mal. No activity with GlcNAc." evidence="4">
    <original>R</original>
    <variation>K</variation>
    <location>
        <position position="53"/>
    </location>
</feature>
<feature type="mutagenesis site" description="6-fold decrease in kcat with GlcNAc-Mal." evidence="4">
    <original>R</original>
    <variation>K</variation>
    <location>
        <position position="109"/>
    </location>
</feature>
<feature type="mutagenesis site" description="4-fold decrease in activity." evidence="4">
    <original>H</original>
    <variation>A</variation>
    <location>
        <position position="110"/>
    </location>
</feature>
<proteinExistence type="evidence at protein level"/>
<keyword id="KW-0378">Hydrolase</keyword>
<keyword id="KW-0479">Metal-binding</keyword>
<keyword id="KW-1185">Reference proteome</keyword>
<keyword id="KW-0862">Zinc</keyword>
<gene>
    <name evidence="5" type="primary">bshB1</name>
    <name evidence="6" type="synonym">bshB</name>
    <name evidence="8" type="ordered locus">BA_1557</name>
    <name evidence="10" type="ordered locus">BAS1444</name>
    <name evidence="9" type="ordered locus">GBAA_1557</name>
    <name evidence="12" type="ORF">BF27_424</name>
    <name evidence="11" type="ORF">TM00_07895</name>
</gene>
<reference key="1">
    <citation type="journal article" date="2003" name="Nature">
        <title>The genome sequence of Bacillus anthracis Ames and comparison to closely related bacteria.</title>
        <authorList>
            <person name="Read T.D."/>
            <person name="Peterson S.N."/>
            <person name="Tourasse N.J."/>
            <person name="Baillie L.W."/>
            <person name="Paulsen I.T."/>
            <person name="Nelson K.E."/>
            <person name="Tettelin H."/>
            <person name="Fouts D.E."/>
            <person name="Eisen J.A."/>
            <person name="Gill S.R."/>
            <person name="Holtzapple E.K."/>
            <person name="Okstad O.A."/>
            <person name="Helgason E."/>
            <person name="Rilstone J."/>
            <person name="Wu M."/>
            <person name="Kolonay J.F."/>
            <person name="Beanan M.J."/>
            <person name="Dodson R.J."/>
            <person name="Brinkac L.M."/>
            <person name="Gwinn M.L."/>
            <person name="DeBoy R.T."/>
            <person name="Madpu R."/>
            <person name="Daugherty S.C."/>
            <person name="Durkin A.S."/>
            <person name="Haft D.H."/>
            <person name="Nelson W.C."/>
            <person name="Peterson J.D."/>
            <person name="Pop M."/>
            <person name="Khouri H.M."/>
            <person name="Radune D."/>
            <person name="Benton J.L."/>
            <person name="Mahamoud Y."/>
            <person name="Jiang L."/>
            <person name="Hance I.R."/>
            <person name="Weidman J.F."/>
            <person name="Berry K.J."/>
            <person name="Plaut R.D."/>
            <person name="Wolf A.M."/>
            <person name="Watkins K.L."/>
            <person name="Nierman W.C."/>
            <person name="Hazen A."/>
            <person name="Cline R.T."/>
            <person name="Redmond C."/>
            <person name="Thwaite J.E."/>
            <person name="White O."/>
            <person name="Salzberg S.L."/>
            <person name="Thomason B."/>
            <person name="Friedlander A.M."/>
            <person name="Koehler T.M."/>
            <person name="Hanna P.C."/>
            <person name="Kolstoe A.-B."/>
            <person name="Fraser C.M."/>
        </authorList>
    </citation>
    <scope>NUCLEOTIDE SEQUENCE [LARGE SCALE GENOMIC DNA]</scope>
    <source>
        <strain>Ames / isolate Porton</strain>
    </source>
</reference>
<reference key="2">
    <citation type="journal article" date="2009" name="J. Bacteriol.">
        <title>The complete genome sequence of Bacillus anthracis Ames 'Ancestor'.</title>
        <authorList>
            <person name="Ravel J."/>
            <person name="Jiang L."/>
            <person name="Stanley S.T."/>
            <person name="Wilson M.R."/>
            <person name="Decker R.S."/>
            <person name="Read T.D."/>
            <person name="Worsham P."/>
            <person name="Keim P.S."/>
            <person name="Salzberg S.L."/>
            <person name="Fraser-Liggett C.M."/>
            <person name="Rasko D.A."/>
        </authorList>
    </citation>
    <scope>NUCLEOTIDE SEQUENCE [LARGE SCALE GENOMIC DNA]</scope>
    <source>
        <strain>Ames ancestor</strain>
    </source>
</reference>
<reference key="3">
    <citation type="submission" date="2004-01" db="EMBL/GenBank/DDBJ databases">
        <title>Complete genome sequence of Bacillus anthracis Sterne.</title>
        <authorList>
            <person name="Brettin T.S."/>
            <person name="Bruce D."/>
            <person name="Challacombe J.F."/>
            <person name="Gilna P."/>
            <person name="Han C."/>
            <person name="Hill K."/>
            <person name="Hitchcock P."/>
            <person name="Jackson P."/>
            <person name="Keim P."/>
            <person name="Longmire J."/>
            <person name="Lucas S."/>
            <person name="Okinaka R."/>
            <person name="Richardson P."/>
            <person name="Rubin E."/>
            <person name="Tice H."/>
        </authorList>
    </citation>
    <scope>NUCLEOTIDE SEQUENCE [LARGE SCALE GENOMIC DNA]</scope>
    <source>
        <strain>Sterne</strain>
    </source>
</reference>
<reference key="4">
    <citation type="submission" date="2014-10" db="EMBL/GenBank/DDBJ databases">
        <authorList>
            <person name="Davenport K.W."/>
            <person name="Bishop-Lilly K.A."/>
            <person name="Broomall S.M."/>
            <person name="Chain P.S."/>
            <person name="Chertkov O."/>
            <person name="Coyne S.R."/>
            <person name="Daligault H.E."/>
            <person name="Erkkila T."/>
            <person name="Frey K.G."/>
            <person name="Gibbons H.S."/>
            <person name="Gu W."/>
            <person name="Jaissle J."/>
            <person name="Johnson S.L."/>
            <person name="Koroleva G.I."/>
            <person name="Ladner J.T."/>
            <person name="Lo C.-C."/>
            <person name="Minogue T.D."/>
            <person name="Munk C."/>
            <person name="Palacios G.F."/>
            <person name="Redden C.L."/>
            <person name="Rosenzweig C.N."/>
            <person name="Scholz M.B."/>
            <person name="Teshima H."/>
            <person name="Xu Y."/>
        </authorList>
    </citation>
    <scope>NUCLEOTIDE SEQUENCE [LARGE SCALE GENOMIC DNA]</scope>
    <source>
        <strain>2002013094</strain>
    </source>
</reference>
<reference key="5">
    <citation type="submission" date="2015-01" db="EMBL/GenBank/DDBJ databases">
        <title>Genome sequence of Bacillus anthracis Pollino isolated from a bovine anthrax-burial site in Italy.</title>
        <authorList>
            <person name="Fasanella A."/>
            <person name="Braun P."/>
            <person name="Grass G."/>
            <person name="Hanczaruk M."/>
            <person name="Aceti A."/>
            <person name="Serrecchia L."/>
            <person name="Marino L."/>
            <person name="Georgi E."/>
            <person name="Antwerpen M.H."/>
        </authorList>
    </citation>
    <scope>NUCLEOTIDE SEQUENCE [LARGE SCALE GENOMIC DNA]</scope>
    <source>
        <strain>Pollino</strain>
    </source>
</reference>
<reference key="6">
    <citation type="journal article" date="2010" name="Biochemistry">
        <title>Characterization of the N-acetyl-alpha-D-glucosaminyl L-malate synthase and deacetylase functions for bacillithiol biosynthesis in Bacillus anthracis.</title>
        <authorList>
            <person name="Parsonage D."/>
            <person name="Newton G.L."/>
            <person name="Holder R.C."/>
            <person name="Wallace B.D."/>
            <person name="Paige C."/>
            <person name="Hamilton C.J."/>
            <person name="Dos Santos P.C."/>
            <person name="Redinbo M.R."/>
            <person name="Reid S.D."/>
            <person name="Claiborne A."/>
        </authorList>
    </citation>
    <scope>FUNCTION</scope>
    <scope>CATALYTIC ACTIVITY</scope>
    <scope>BIOPHYSICOCHEMICAL PROPERTIES</scope>
    <scope>DISRUPTION PHENOTYPE</scope>
    <source>
        <strain>Sterne</strain>
    </source>
</reference>
<reference key="7">
    <citation type="journal article" date="2010" name="Proc. Natl. Acad. Sci. U.S.A.">
        <title>Biosynthesis and functions of bacillithiol, a major low-molecular-weight thiol in Bacilli.</title>
        <authorList>
            <person name="Gaballa A."/>
            <person name="Newton G.L."/>
            <person name="Antelmann H."/>
            <person name="Parsonage D."/>
            <person name="Upton H."/>
            <person name="Rawat M."/>
            <person name="Claiborne A."/>
            <person name="Fahey R.C."/>
            <person name="Helmann J.D."/>
        </authorList>
    </citation>
    <scope>FUNCTION</scope>
    <scope>CATALYTIC ACTIVITY</scope>
</reference>
<reference key="8">
    <citation type="journal article" date="2013" name="Biochem. J.">
        <title>Cross-functionalities of Bacillus deacetylases involved in bacillithiol biosynthesis and bacillithiol-S-conjugate detoxification pathways.</title>
        <authorList>
            <person name="Fang Z."/>
            <person name="Roberts A.A."/>
            <person name="Weidman K."/>
            <person name="Sharma S.V."/>
            <person name="Claiborne A."/>
            <person name="Hamilton C.J."/>
            <person name="Dos Santos P.C."/>
        </authorList>
    </citation>
    <scope>FUNCTION</scope>
    <scope>CATALYTIC ACTIVITY</scope>
    <scope>COFACTOR</scope>
    <scope>ACTIVITY REGULATION</scope>
    <scope>BIOPHYSICOCHEMICAL PROPERTIES</scope>
    <scope>MUTAGENESIS OF ASP-14; ARG-53; ARG-109 AND HIS-110</scope>
</reference>
<organism>
    <name type="scientific">Bacillus anthracis</name>
    <dbReference type="NCBI Taxonomy" id="1392"/>
    <lineage>
        <taxon>Bacteria</taxon>
        <taxon>Bacillati</taxon>
        <taxon>Bacillota</taxon>
        <taxon>Bacilli</taxon>
        <taxon>Bacillales</taxon>
        <taxon>Bacillaceae</taxon>
        <taxon>Bacillus</taxon>
        <taxon>Bacillus cereus group</taxon>
    </lineage>
</organism>
<comment type="function">
    <text evidence="2 3 4">Involved in bacillithiol (BSH) biosynthesis. Catalyzes the second step of the pathway, the deacetylation of N-acetylglucosaminylmalate (GlcNAc-Mal) to glucosamine malate (GlcN-Mal).</text>
</comment>
<comment type="catalytic activity">
    <reaction evidence="2 3 4">
        <text>(S)-malyl N-acetyl-alpha-D-glucosaminide + H2O = (S)-malyl alpha-D-glucosaminide + acetate</text>
        <dbReference type="Rhea" id="RHEA:33411"/>
        <dbReference type="ChEBI" id="CHEBI:15377"/>
        <dbReference type="ChEBI" id="CHEBI:30089"/>
        <dbReference type="ChEBI" id="CHEBI:64870"/>
        <dbReference type="ChEBI" id="CHEBI:64871"/>
    </reaction>
</comment>
<comment type="cofactor">
    <cofactor evidence="4">
        <name>Zn(2+)</name>
        <dbReference type="ChEBI" id="CHEBI:29105"/>
    </cofactor>
    <text evidence="4">Can also use Ni(2+), Co(2+) and Fe(3+).</text>
</comment>
<comment type="activity regulation">
    <text evidence="4">Inhibited by BSH.</text>
</comment>
<comment type="biophysicochemical properties">
    <kinetics>
        <KM evidence="3">0.16 mM for GlcNAc-Mal</KM>
        <KM evidence="4">0.19 mM for GlcNAc-Mal</KM>
        <KM evidence="4">57.1 mM for GlcNAc</KM>
        <KM evidence="4">0.48 mM for BSH</KM>
        <KM evidence="4">0.32 mM for bacillithiol-S-bimane (BSmB)</KM>
        <text evidence="3 4">kcat is 42 sec(-1) with GlcNAc-Mal (PubMed:20799687). kcat is 8.24 sec(-1) with GlcNAc-Mal (PubMed:23758290).</text>
    </kinetics>
</comment>
<comment type="disruption phenotype">
    <text evidence="3">Deletion reduces bacillithiol levels by 30%.</text>
</comment>
<comment type="similarity">
    <text evidence="7">Belongs to the PIGL family.</text>
</comment>